<comment type="function">
    <text evidence="5">Plays a role in the regulation of ureagenesis by producing the essential cofactor N-acetylglutamate (NAG), thus modulating carbamoylphosphate synthase I (CPS1) activity.</text>
</comment>
<comment type="catalytic activity">
    <reaction evidence="5">
        <text>L-glutamate + acetyl-CoA = N-acetyl-L-glutamate + CoA + H(+)</text>
        <dbReference type="Rhea" id="RHEA:24292"/>
        <dbReference type="ChEBI" id="CHEBI:15378"/>
        <dbReference type="ChEBI" id="CHEBI:29985"/>
        <dbReference type="ChEBI" id="CHEBI:44337"/>
        <dbReference type="ChEBI" id="CHEBI:57287"/>
        <dbReference type="ChEBI" id="CHEBI:57288"/>
        <dbReference type="EC" id="2.3.1.1"/>
    </reaction>
</comment>
<comment type="activity regulation">
    <text evidence="5">Increased by L-arginine.</text>
</comment>
<comment type="pathway">
    <text evidence="10">Amino-acid biosynthesis; L-arginine biosynthesis; N(2)-acetyl-L-ornithine from L-glutamate: step 1/4.</text>
</comment>
<comment type="subunit">
    <text evidence="1 7">Homodimer (By similarity). Homotetramer (PubMed:23894642).</text>
</comment>
<comment type="subcellular location">
    <subcellularLocation>
        <location evidence="1">Mitochondrion matrix</location>
    </subcellularLocation>
</comment>
<comment type="alternative products">
    <event type="alternative splicing"/>
    <isoform>
        <id>Q8R4H7-1</id>
        <name>1</name>
        <sequence type="displayed"/>
    </isoform>
    <isoform>
        <id>Q8R4H7-2</id>
        <name>2</name>
        <sequence type="described" ref="VSP_015620"/>
    </isoform>
</comment>
<comment type="tissue specificity">
    <text evidence="5">Highly expressed in the liver and small intestine. Weakly expressed in the kidney, spleen and testis.</text>
</comment>
<comment type="domain">
    <text evidence="1">The amino-acid kinase (AAK) domain mediates binding of the allosteric activator L-arginine.</text>
</comment>
<comment type="PTM">
    <text evidence="6">Probably processed by mitochondrial processing peptidase (MPP). The long form has not yet been isolated.</text>
</comment>
<comment type="similarity">
    <text evidence="9">Belongs to the acetyltransferase family.</text>
</comment>
<protein>
    <recommendedName>
        <fullName>N-acetylglutamate synthase, mitochondrial</fullName>
        <ecNumber evidence="5">2.3.1.1</ecNumber>
    </recommendedName>
    <alternativeName>
        <fullName>Amino-acid acetyltransferase</fullName>
    </alternativeName>
    <component>
        <recommendedName>
            <fullName>N-acetylglutamate synthase long form</fullName>
        </recommendedName>
    </component>
    <component>
        <recommendedName>
            <fullName>N-acetylglutamate synthase short form</fullName>
        </recommendedName>
    </component>
    <component>
        <recommendedName>
            <fullName>N-acetylglutamate synthase conserved domain form</fullName>
        </recommendedName>
    </component>
</protein>
<reference key="1">
    <citation type="journal article" date="2002" name="Biochem. J.">
        <title>Identification, cloning and expression of the mouse N-acetylglutamate synthase gene.</title>
        <authorList>
            <person name="Caldovic L."/>
            <person name="Morizono H."/>
            <person name="Yu X."/>
            <person name="Thompson M."/>
            <person name="Shi D."/>
            <person name="Gallegos R."/>
            <person name="Allewell N.M."/>
            <person name="Malamy M.H."/>
            <person name="Tuchman M."/>
        </authorList>
    </citation>
    <scope>NUCLEOTIDE SEQUENCE [MRNA] (ISOFORM 1)</scope>
    <scope>FUNCTION</scope>
    <scope>CATALYTIC ACTIVITY</scope>
    <scope>ACTIVITY REGULATION</scope>
    <scope>TISSUE SPECIFICITY</scope>
    <source>
        <strain>BALB/cJ</strain>
        <tissue>Liver</tissue>
    </source>
</reference>
<reference key="2">
    <citation type="submission" date="2002-06" db="EMBL/GenBank/DDBJ databases">
        <title>Molecular characterization of the murine N-acetylglutamate synthase.</title>
        <authorList>
            <person name="Eckhardt M."/>
            <person name="Yaghootfam A."/>
            <person name="Gieselmann V."/>
        </authorList>
    </citation>
    <scope>NUCLEOTIDE SEQUENCE [MRNA] (ISOFORM 1)</scope>
    <source>
        <strain>129/Ola</strain>
        <tissue>Liver</tissue>
    </source>
</reference>
<reference key="3">
    <citation type="journal article" date="2005" name="Science">
        <title>The transcriptional landscape of the mammalian genome.</title>
        <authorList>
            <person name="Carninci P."/>
            <person name="Kasukawa T."/>
            <person name="Katayama S."/>
            <person name="Gough J."/>
            <person name="Frith M.C."/>
            <person name="Maeda N."/>
            <person name="Oyama R."/>
            <person name="Ravasi T."/>
            <person name="Lenhard B."/>
            <person name="Wells C."/>
            <person name="Kodzius R."/>
            <person name="Shimokawa K."/>
            <person name="Bajic V.B."/>
            <person name="Brenner S.E."/>
            <person name="Batalov S."/>
            <person name="Forrest A.R."/>
            <person name="Zavolan M."/>
            <person name="Davis M.J."/>
            <person name="Wilming L.G."/>
            <person name="Aidinis V."/>
            <person name="Allen J.E."/>
            <person name="Ambesi-Impiombato A."/>
            <person name="Apweiler R."/>
            <person name="Aturaliya R.N."/>
            <person name="Bailey T.L."/>
            <person name="Bansal M."/>
            <person name="Baxter L."/>
            <person name="Beisel K.W."/>
            <person name="Bersano T."/>
            <person name="Bono H."/>
            <person name="Chalk A.M."/>
            <person name="Chiu K.P."/>
            <person name="Choudhary V."/>
            <person name="Christoffels A."/>
            <person name="Clutterbuck D.R."/>
            <person name="Crowe M.L."/>
            <person name="Dalla E."/>
            <person name="Dalrymple B.P."/>
            <person name="de Bono B."/>
            <person name="Della Gatta G."/>
            <person name="di Bernardo D."/>
            <person name="Down T."/>
            <person name="Engstrom P."/>
            <person name="Fagiolini M."/>
            <person name="Faulkner G."/>
            <person name="Fletcher C.F."/>
            <person name="Fukushima T."/>
            <person name="Furuno M."/>
            <person name="Futaki S."/>
            <person name="Gariboldi M."/>
            <person name="Georgii-Hemming P."/>
            <person name="Gingeras T.R."/>
            <person name="Gojobori T."/>
            <person name="Green R.E."/>
            <person name="Gustincich S."/>
            <person name="Harbers M."/>
            <person name="Hayashi Y."/>
            <person name="Hensch T.K."/>
            <person name="Hirokawa N."/>
            <person name="Hill D."/>
            <person name="Huminiecki L."/>
            <person name="Iacono M."/>
            <person name="Ikeo K."/>
            <person name="Iwama A."/>
            <person name="Ishikawa T."/>
            <person name="Jakt M."/>
            <person name="Kanapin A."/>
            <person name="Katoh M."/>
            <person name="Kawasawa Y."/>
            <person name="Kelso J."/>
            <person name="Kitamura H."/>
            <person name="Kitano H."/>
            <person name="Kollias G."/>
            <person name="Krishnan S.P."/>
            <person name="Kruger A."/>
            <person name="Kummerfeld S.K."/>
            <person name="Kurochkin I.V."/>
            <person name="Lareau L.F."/>
            <person name="Lazarevic D."/>
            <person name="Lipovich L."/>
            <person name="Liu J."/>
            <person name="Liuni S."/>
            <person name="McWilliam S."/>
            <person name="Madan Babu M."/>
            <person name="Madera M."/>
            <person name="Marchionni L."/>
            <person name="Matsuda H."/>
            <person name="Matsuzawa S."/>
            <person name="Miki H."/>
            <person name="Mignone F."/>
            <person name="Miyake S."/>
            <person name="Morris K."/>
            <person name="Mottagui-Tabar S."/>
            <person name="Mulder N."/>
            <person name="Nakano N."/>
            <person name="Nakauchi H."/>
            <person name="Ng P."/>
            <person name="Nilsson R."/>
            <person name="Nishiguchi S."/>
            <person name="Nishikawa S."/>
            <person name="Nori F."/>
            <person name="Ohara O."/>
            <person name="Okazaki Y."/>
            <person name="Orlando V."/>
            <person name="Pang K.C."/>
            <person name="Pavan W.J."/>
            <person name="Pavesi G."/>
            <person name="Pesole G."/>
            <person name="Petrovsky N."/>
            <person name="Piazza S."/>
            <person name="Reed J."/>
            <person name="Reid J.F."/>
            <person name="Ring B.Z."/>
            <person name="Ringwald M."/>
            <person name="Rost B."/>
            <person name="Ruan Y."/>
            <person name="Salzberg S.L."/>
            <person name="Sandelin A."/>
            <person name="Schneider C."/>
            <person name="Schoenbach C."/>
            <person name="Sekiguchi K."/>
            <person name="Semple C.A."/>
            <person name="Seno S."/>
            <person name="Sessa L."/>
            <person name="Sheng Y."/>
            <person name="Shibata Y."/>
            <person name="Shimada H."/>
            <person name="Shimada K."/>
            <person name="Silva D."/>
            <person name="Sinclair B."/>
            <person name="Sperling S."/>
            <person name="Stupka E."/>
            <person name="Sugiura K."/>
            <person name="Sultana R."/>
            <person name="Takenaka Y."/>
            <person name="Taki K."/>
            <person name="Tammoja K."/>
            <person name="Tan S.L."/>
            <person name="Tang S."/>
            <person name="Taylor M.S."/>
            <person name="Tegner J."/>
            <person name="Teichmann S.A."/>
            <person name="Ueda H.R."/>
            <person name="van Nimwegen E."/>
            <person name="Verardo R."/>
            <person name="Wei C.L."/>
            <person name="Yagi K."/>
            <person name="Yamanishi H."/>
            <person name="Zabarovsky E."/>
            <person name="Zhu S."/>
            <person name="Zimmer A."/>
            <person name="Hide W."/>
            <person name="Bult C."/>
            <person name="Grimmond S.M."/>
            <person name="Teasdale R.D."/>
            <person name="Liu E.T."/>
            <person name="Brusic V."/>
            <person name="Quackenbush J."/>
            <person name="Wahlestedt C."/>
            <person name="Mattick J.S."/>
            <person name="Hume D.A."/>
            <person name="Kai C."/>
            <person name="Sasaki D."/>
            <person name="Tomaru Y."/>
            <person name="Fukuda S."/>
            <person name="Kanamori-Katayama M."/>
            <person name="Suzuki M."/>
            <person name="Aoki J."/>
            <person name="Arakawa T."/>
            <person name="Iida J."/>
            <person name="Imamura K."/>
            <person name="Itoh M."/>
            <person name="Kato T."/>
            <person name="Kawaji H."/>
            <person name="Kawagashira N."/>
            <person name="Kawashima T."/>
            <person name="Kojima M."/>
            <person name="Kondo S."/>
            <person name="Konno H."/>
            <person name="Nakano K."/>
            <person name="Ninomiya N."/>
            <person name="Nishio T."/>
            <person name="Okada M."/>
            <person name="Plessy C."/>
            <person name="Shibata K."/>
            <person name="Shiraki T."/>
            <person name="Suzuki S."/>
            <person name="Tagami M."/>
            <person name="Waki K."/>
            <person name="Watahiki A."/>
            <person name="Okamura-Oho Y."/>
            <person name="Suzuki H."/>
            <person name="Kawai J."/>
            <person name="Hayashizaki Y."/>
        </authorList>
    </citation>
    <scope>NUCLEOTIDE SEQUENCE [LARGE SCALE MRNA] (ISOFORM 2)</scope>
    <source>
        <strain>C57BL/6J</strain>
        <tissue>Testis</tissue>
    </source>
</reference>
<reference key="4">
    <citation type="journal article" date="2009" name="PLoS Biol.">
        <title>Lineage-specific biology revealed by a finished genome assembly of the mouse.</title>
        <authorList>
            <person name="Church D.M."/>
            <person name="Goodstadt L."/>
            <person name="Hillier L.W."/>
            <person name="Zody M.C."/>
            <person name="Goldstein S."/>
            <person name="She X."/>
            <person name="Bult C.J."/>
            <person name="Agarwala R."/>
            <person name="Cherry J.L."/>
            <person name="DiCuccio M."/>
            <person name="Hlavina W."/>
            <person name="Kapustin Y."/>
            <person name="Meric P."/>
            <person name="Maglott D."/>
            <person name="Birtle Z."/>
            <person name="Marques A.C."/>
            <person name="Graves T."/>
            <person name="Zhou S."/>
            <person name="Teague B."/>
            <person name="Potamousis K."/>
            <person name="Churas C."/>
            <person name="Place M."/>
            <person name="Herschleb J."/>
            <person name="Runnheim R."/>
            <person name="Forrest D."/>
            <person name="Amos-Landgraf J."/>
            <person name="Schwartz D.C."/>
            <person name="Cheng Z."/>
            <person name="Lindblad-Toh K."/>
            <person name="Eichler E.E."/>
            <person name="Ponting C.P."/>
        </authorList>
    </citation>
    <scope>NUCLEOTIDE SEQUENCE [LARGE SCALE GENOMIC DNA]</scope>
    <source>
        <strain>C57BL/6J</strain>
    </source>
</reference>
<reference key="5">
    <citation type="submission" date="2005-07" db="EMBL/GenBank/DDBJ databases">
        <authorList>
            <person name="Mural R.J."/>
            <person name="Adams M.D."/>
            <person name="Myers E.W."/>
            <person name="Smith H.O."/>
            <person name="Venter J.C."/>
        </authorList>
    </citation>
    <scope>NUCLEOTIDE SEQUENCE [LARGE SCALE GENOMIC DNA]</scope>
</reference>
<reference key="6">
    <citation type="journal article" date="2004" name="Genome Res.">
        <title>The status, quality, and expansion of the NIH full-length cDNA project: the Mammalian Gene Collection (MGC).</title>
        <authorList>
            <consortium name="The MGC Project Team"/>
        </authorList>
    </citation>
    <scope>NUCLEOTIDE SEQUENCE [LARGE SCALE MRNA] (ISOFORM 1)</scope>
    <source>
        <strain>FVB/N</strain>
        <tissue>Liver</tissue>
    </source>
</reference>
<reference key="7">
    <citation type="journal article" date="2004" name="Mol. Genet. Metab.">
        <title>Mammalian N-acetylglutamate synthase.</title>
        <authorList>
            <person name="Morizono H."/>
            <person name="Caldovic L."/>
            <person name="Shi D."/>
            <person name="Tuchman M."/>
        </authorList>
    </citation>
    <scope>PROTEIN SEQUENCE OF 51-527 AND 84-527</scope>
    <scope>PROTEOLYTIC PROCESSING</scope>
</reference>
<reference key="8">
    <citation type="journal article" date="2010" name="Cell">
        <title>A tissue-specific atlas of mouse protein phosphorylation and expression.</title>
        <authorList>
            <person name="Huttlin E.L."/>
            <person name="Jedrychowski M.P."/>
            <person name="Elias J.E."/>
            <person name="Goswami T."/>
            <person name="Rad R."/>
            <person name="Beausoleil S.A."/>
            <person name="Villen J."/>
            <person name="Haas W."/>
            <person name="Sowa M.E."/>
            <person name="Gygi S.P."/>
        </authorList>
    </citation>
    <scope>IDENTIFICATION BY MASS SPECTROMETRY [LARGE SCALE ANALYSIS]</scope>
    <source>
        <tissue>Liver</tissue>
    </source>
</reference>
<reference key="9">
    <citation type="journal article" date="2013" name="PLoS ONE">
        <title>Crystal structure of the N-acetyltransferase domain of human N-acetyl-L-glutamate synthase in complex with N-acetyl-L-glutamate provides insights into its catalytic and regulatory mechanisms.</title>
        <authorList>
            <person name="Zhao G."/>
            <person name="Jin Z."/>
            <person name="Allewell N.M."/>
            <person name="Tuchman M."/>
            <person name="Shi D."/>
        </authorList>
    </citation>
    <scope>SUBUNIT</scope>
</reference>
<evidence type="ECO:0000250" key="1">
    <source>
        <dbReference type="UniProtKB" id="Q8N159"/>
    </source>
</evidence>
<evidence type="ECO:0000255" key="2"/>
<evidence type="ECO:0000255" key="3">
    <source>
        <dbReference type="PROSITE-ProRule" id="PRU00532"/>
    </source>
</evidence>
<evidence type="ECO:0000256" key="4">
    <source>
        <dbReference type="SAM" id="MobiDB-lite"/>
    </source>
</evidence>
<evidence type="ECO:0000269" key="5">
    <source>
    </source>
</evidence>
<evidence type="ECO:0000269" key="6">
    <source>
    </source>
</evidence>
<evidence type="ECO:0000269" key="7">
    <source>
    </source>
</evidence>
<evidence type="ECO:0000303" key="8">
    <source>
    </source>
</evidence>
<evidence type="ECO:0000305" key="9"/>
<evidence type="ECO:0000305" key="10">
    <source>
    </source>
</evidence>
<name>NAGS_MOUSE</name>
<accession>Q8R4H7</accession>
<accession>B1AQG2</accession>
<accession>Q8C6G6</accession>
<accession>Q8CI77</accession>
<accession>Q8K1R8</accession>
<feature type="transit peptide" description="Mitochondrion" evidence="2">
    <location>
        <begin position="1"/>
        <end position="18"/>
    </location>
</feature>
<feature type="chain" id="PRO_0000041933" description="N-acetylglutamate synthase long form" evidence="2">
    <location>
        <begin position="19"/>
        <end position="527"/>
    </location>
</feature>
<feature type="chain" id="PRO_0000041934" description="N-acetylglutamate synthase short form">
    <location>
        <begin position="51"/>
        <end position="527"/>
    </location>
</feature>
<feature type="chain" id="PRO_0000041935" description="N-acetylglutamate synthase conserved domain form">
    <location>
        <begin position="84"/>
        <end position="527"/>
    </location>
</feature>
<feature type="domain" description="N-acetyltransferase" evidence="3">
    <location>
        <begin position="368"/>
        <end position="519"/>
    </location>
</feature>
<feature type="region of interest" description="Disordered" evidence="4">
    <location>
        <begin position="14"/>
        <end position="91"/>
    </location>
</feature>
<feature type="region of interest" description="Amino-acid kinase domain (AAK)" evidence="1">
    <location>
        <begin position="19"/>
        <end position="369"/>
    </location>
</feature>
<feature type="compositionally biased region" description="Basic and acidic residues" evidence="4">
    <location>
        <begin position="54"/>
        <end position="63"/>
    </location>
</feature>
<feature type="compositionally biased region" description="Pro residues" evidence="4">
    <location>
        <begin position="77"/>
        <end position="89"/>
    </location>
</feature>
<feature type="binding site" evidence="1">
    <location>
        <position position="394"/>
    </location>
    <ligand>
        <name>substrate</name>
    </ligand>
</feature>
<feature type="binding site" evidence="1">
    <location>
        <position position="437"/>
    </location>
    <ligand>
        <name>substrate</name>
    </ligand>
</feature>
<feature type="binding site" evidence="1">
    <location>
        <begin position="467"/>
        <end position="472"/>
    </location>
    <ligand>
        <name>substrate</name>
    </ligand>
</feature>
<feature type="splice variant" id="VSP_015620" description="In isoform 2." evidence="8">
    <location>
        <begin position="1"/>
        <end position="159"/>
    </location>
</feature>
<feature type="sequence conflict" description="In Ref. 1; AAL86770." evidence="9" ref="1">
    <original>EEPS</original>
    <variation>DPRVR</variation>
    <location>
        <begin position="72"/>
        <end position="75"/>
    </location>
</feature>
<organism>
    <name type="scientific">Mus musculus</name>
    <name type="common">Mouse</name>
    <dbReference type="NCBI Taxonomy" id="10090"/>
    <lineage>
        <taxon>Eukaryota</taxon>
        <taxon>Metazoa</taxon>
        <taxon>Chordata</taxon>
        <taxon>Craniata</taxon>
        <taxon>Vertebrata</taxon>
        <taxon>Euteleostomi</taxon>
        <taxon>Mammalia</taxon>
        <taxon>Eutheria</taxon>
        <taxon>Euarchontoglires</taxon>
        <taxon>Glires</taxon>
        <taxon>Rodentia</taxon>
        <taxon>Myomorpha</taxon>
        <taxon>Muroidea</taxon>
        <taxon>Muridae</taxon>
        <taxon>Murinae</taxon>
        <taxon>Mus</taxon>
        <taxon>Mus</taxon>
    </lineage>
</organism>
<dbReference type="EC" id="2.3.1.1" evidence="5"/>
<dbReference type="EMBL" id="AF462069">
    <property type="protein sequence ID" value="AAL86770.1"/>
    <property type="molecule type" value="mRNA"/>
</dbReference>
<dbReference type="EMBL" id="AJ489814">
    <property type="protein sequence ID" value="CAD34015.1"/>
    <property type="molecule type" value="mRNA"/>
</dbReference>
<dbReference type="EMBL" id="AK075765">
    <property type="protein sequence ID" value="BAC35941.1"/>
    <property type="molecule type" value="mRNA"/>
</dbReference>
<dbReference type="EMBL" id="AL591145">
    <property type="status" value="NOT_ANNOTATED_CDS"/>
    <property type="molecule type" value="Genomic_DNA"/>
</dbReference>
<dbReference type="EMBL" id="CH466558">
    <property type="protein sequence ID" value="EDL34091.1"/>
    <property type="molecule type" value="Genomic_DNA"/>
</dbReference>
<dbReference type="EMBL" id="BC057990">
    <property type="protein sequence ID" value="AAH57990.1"/>
    <property type="molecule type" value="mRNA"/>
</dbReference>
<dbReference type="CCDS" id="CCDS25488.1">
    <molecule id="Q8R4H7-1"/>
</dbReference>
<dbReference type="RefSeq" id="NP_665828.1">
    <molecule id="Q8R4H7-1"/>
    <property type="nucleotide sequence ID" value="NM_145829.2"/>
</dbReference>
<dbReference type="SMR" id="Q8R4H7"/>
<dbReference type="FunCoup" id="Q8R4H7">
    <property type="interactions" value="351"/>
</dbReference>
<dbReference type="STRING" id="10090.ENSMUSP00000050258"/>
<dbReference type="iPTMnet" id="Q8R4H7"/>
<dbReference type="PhosphoSitePlus" id="Q8R4H7"/>
<dbReference type="SwissPalm" id="Q8R4H7"/>
<dbReference type="jPOST" id="Q8R4H7"/>
<dbReference type="PaxDb" id="10090-ENSMUSP00000050258"/>
<dbReference type="PeptideAtlas" id="Q8R4H7"/>
<dbReference type="ProteomicsDB" id="252762">
    <molecule id="Q8R4H7-1"/>
</dbReference>
<dbReference type="ProteomicsDB" id="252763">
    <molecule id="Q8R4H7-2"/>
</dbReference>
<dbReference type="Antibodypedia" id="29652">
    <property type="antibodies" value="80 antibodies from 23 providers"/>
</dbReference>
<dbReference type="DNASU" id="217214"/>
<dbReference type="Ensembl" id="ENSMUST00000055409.6">
    <molecule id="Q8R4H7-1"/>
    <property type="protein sequence ID" value="ENSMUSP00000050258.6"/>
    <property type="gene ID" value="ENSMUSG00000048217.12"/>
</dbReference>
<dbReference type="GeneID" id="217214"/>
<dbReference type="KEGG" id="mmu:217214"/>
<dbReference type="UCSC" id="uc007lqp.2">
    <molecule id="Q8R4H7-1"/>
    <property type="organism name" value="mouse"/>
</dbReference>
<dbReference type="AGR" id="MGI:2387600"/>
<dbReference type="CTD" id="162417"/>
<dbReference type="MGI" id="MGI:2387600">
    <property type="gene designation" value="Nags"/>
</dbReference>
<dbReference type="VEuPathDB" id="HostDB:ENSMUSG00000048217"/>
<dbReference type="eggNOG" id="KOG2436">
    <property type="taxonomic scope" value="Eukaryota"/>
</dbReference>
<dbReference type="GeneTree" id="ENSGT00390000005602"/>
<dbReference type="HOGENOM" id="CLU_034853_0_0_1"/>
<dbReference type="InParanoid" id="Q8R4H7"/>
<dbReference type="OMA" id="FQTCYHS"/>
<dbReference type="OrthoDB" id="438291at2759"/>
<dbReference type="PhylomeDB" id="Q8R4H7"/>
<dbReference type="TreeFam" id="TF332628"/>
<dbReference type="BRENDA" id="2.3.1.1">
    <property type="organism ID" value="3474"/>
</dbReference>
<dbReference type="Reactome" id="R-MMU-70635">
    <property type="pathway name" value="Urea cycle"/>
</dbReference>
<dbReference type="UniPathway" id="UPA00068">
    <property type="reaction ID" value="UER00106"/>
</dbReference>
<dbReference type="BioGRID-ORCS" id="217214">
    <property type="hits" value="4 hits in 76 CRISPR screens"/>
</dbReference>
<dbReference type="ChiTaRS" id="Nags">
    <property type="organism name" value="mouse"/>
</dbReference>
<dbReference type="PRO" id="PR:Q8R4H7"/>
<dbReference type="Proteomes" id="UP000000589">
    <property type="component" value="Chromosome 11"/>
</dbReference>
<dbReference type="RNAct" id="Q8R4H7">
    <property type="molecule type" value="protein"/>
</dbReference>
<dbReference type="Bgee" id="ENSMUSG00000048217">
    <property type="expression patterns" value="Expressed in left lobe of liver and 36 other cell types or tissues"/>
</dbReference>
<dbReference type="GO" id="GO:0005759">
    <property type="term" value="C:mitochondrial matrix"/>
    <property type="evidence" value="ECO:0007669"/>
    <property type="project" value="UniProtKB-SubCell"/>
</dbReference>
<dbReference type="GO" id="GO:0005739">
    <property type="term" value="C:mitochondrion"/>
    <property type="evidence" value="ECO:0007005"/>
    <property type="project" value="MGI"/>
</dbReference>
<dbReference type="GO" id="GO:0004042">
    <property type="term" value="F:L-glutamate N-acetyltransferase activity"/>
    <property type="evidence" value="ECO:0000314"/>
    <property type="project" value="MGI"/>
</dbReference>
<dbReference type="GO" id="GO:0006536">
    <property type="term" value="P:glutamate metabolic process"/>
    <property type="evidence" value="ECO:0000314"/>
    <property type="project" value="MGI"/>
</dbReference>
<dbReference type="GO" id="GO:0006526">
    <property type="term" value="P:L-arginine biosynthetic process"/>
    <property type="evidence" value="ECO:0007669"/>
    <property type="project" value="UniProtKB-UniPathway"/>
</dbReference>
<dbReference type="GO" id="GO:0000050">
    <property type="term" value="P:urea cycle"/>
    <property type="evidence" value="ECO:0007669"/>
    <property type="project" value="UniProtKB-KW"/>
</dbReference>
<dbReference type="CDD" id="cd04265">
    <property type="entry name" value="DUF619-NAGS-U"/>
    <property type="match status" value="1"/>
</dbReference>
<dbReference type="FunFam" id="3.40.1160.10:FF:000026">
    <property type="entry name" value="N-acetylglutamate synthase, mitochondrial"/>
    <property type="match status" value="1"/>
</dbReference>
<dbReference type="FunFam" id="3.40.630.30:FF:000045">
    <property type="entry name" value="N-acetylglutamate synthase, mitochondrial"/>
    <property type="match status" value="1"/>
</dbReference>
<dbReference type="Gene3D" id="3.40.630.30">
    <property type="match status" value="1"/>
</dbReference>
<dbReference type="Gene3D" id="3.40.1160.10">
    <property type="entry name" value="Acetylglutamate kinase-like"/>
    <property type="match status" value="1"/>
</dbReference>
<dbReference type="InterPro" id="IPR036393">
    <property type="entry name" value="AceGlu_kinase-like_sf"/>
</dbReference>
<dbReference type="InterPro" id="IPR016181">
    <property type="entry name" value="Acyl_CoA_acyltransferase"/>
</dbReference>
<dbReference type="InterPro" id="IPR011243">
    <property type="entry name" value="GlcNAc_Synth_met"/>
</dbReference>
<dbReference type="InterPro" id="IPR000182">
    <property type="entry name" value="GNAT_dom"/>
</dbReference>
<dbReference type="InterPro" id="IPR006855">
    <property type="entry name" value="Vertebrate-like_GNAT_dom"/>
</dbReference>
<dbReference type="PANTHER" id="PTHR23342">
    <property type="entry name" value="N-ACETYLGLUTAMATE SYNTHASE"/>
    <property type="match status" value="1"/>
</dbReference>
<dbReference type="PANTHER" id="PTHR23342:SF0">
    <property type="entry name" value="N-ACETYLGLUTAMATE SYNTHASE, MITOCHONDRIAL"/>
    <property type="match status" value="1"/>
</dbReference>
<dbReference type="Pfam" id="PF04768">
    <property type="entry name" value="NAT"/>
    <property type="match status" value="1"/>
</dbReference>
<dbReference type="PIRSF" id="PIRSF036442">
    <property type="entry name" value="NAGS_animal"/>
    <property type="match status" value="1"/>
</dbReference>
<dbReference type="SUPFAM" id="SSF55729">
    <property type="entry name" value="Acyl-CoA N-acyltransferases (Nat)"/>
    <property type="match status" value="1"/>
</dbReference>
<dbReference type="SUPFAM" id="SSF53633">
    <property type="entry name" value="Carbamate kinase-like"/>
    <property type="match status" value="1"/>
</dbReference>
<dbReference type="PROSITE" id="PS51731">
    <property type="entry name" value="GNAT_NAGS"/>
    <property type="match status" value="1"/>
</dbReference>
<proteinExistence type="evidence at protein level"/>
<gene>
    <name type="primary">Nags</name>
</gene>
<sequence>MATAWVATALRSAAAARRLRSPGGPGGSRRLSGSARRRGAKSASPGRRLSTARAHAEDAEGAKGRVQSPAVEEPSWTPLPTPLESPAPPAGRSLVQRDIQAFLNQCGASPGEARHWLTQFQTCYHSVDKPFAVMEVDEEVIRCPQAVSRLAFALAFLQRMDMKPLVVLGLPTPTAPSGCLSFWEAKAQLAQSCKVLVDELRHNAATAVPFFGGGSVLSAAEPAPHASYGGIVAVETDLLQWCLESNSIPILCPIGETAARRSVLLDSLEVTASLAKALQPTKIIFLNNSGGLRNNSQKILSNVNLPADLDLVTNAEWLSIKERQQIRLIVDVLSRLPHYSSAVITAASTLLTELFSNKGCGTLFKNAERMLRVRNLDSLDQGRLVNLVNASFGKKLREDYLESLRPRLHSIYVSEGYNAAAILTVEPVLGGTPYLDKFVVSSSRQGQGSGQMLWECLRRDLQTLFWRSRVTNPINPWYFKHSDGSFSNKQWIFFWFGLADIRDSYELVNHAKGLPDSFCKPASDPGS</sequence>
<keyword id="KW-0012">Acyltransferase</keyword>
<keyword id="KW-0025">Alternative splicing</keyword>
<keyword id="KW-0903">Direct protein sequencing</keyword>
<keyword id="KW-0496">Mitochondrion</keyword>
<keyword id="KW-1185">Reference proteome</keyword>
<keyword id="KW-0808">Transferase</keyword>
<keyword id="KW-0809">Transit peptide</keyword>
<keyword id="KW-0835">Urea cycle</keyword>